<keyword id="KW-0274">FAD</keyword>
<keyword id="KW-0285">Flavoprotein</keyword>
<keyword id="KW-0521">NADP</keyword>
<keyword id="KW-0560">Oxidoreductase</keyword>
<keyword id="KW-0676">Redox-active center</keyword>
<gene>
    <name evidence="2" type="primary">cdr</name>
    <name type="ordered locus">SA0831</name>
</gene>
<name>CDR_STAAN</name>
<reference key="1">
    <citation type="journal article" date="2001" name="Lancet">
        <title>Whole genome sequencing of meticillin-resistant Staphylococcus aureus.</title>
        <authorList>
            <person name="Kuroda M."/>
            <person name="Ohta T."/>
            <person name="Uchiyama I."/>
            <person name="Baba T."/>
            <person name="Yuzawa H."/>
            <person name="Kobayashi I."/>
            <person name="Cui L."/>
            <person name="Oguchi A."/>
            <person name="Aoki K."/>
            <person name="Nagai Y."/>
            <person name="Lian J.-Q."/>
            <person name="Ito T."/>
            <person name="Kanamori M."/>
            <person name="Matsumaru H."/>
            <person name="Maruyama A."/>
            <person name="Murakami H."/>
            <person name="Hosoyama A."/>
            <person name="Mizutani-Ui Y."/>
            <person name="Takahashi N.K."/>
            <person name="Sawano T."/>
            <person name="Inoue R."/>
            <person name="Kaito C."/>
            <person name="Sekimizu K."/>
            <person name="Hirakawa H."/>
            <person name="Kuhara S."/>
            <person name="Goto S."/>
            <person name="Yabuzaki J."/>
            <person name="Kanehisa M."/>
            <person name="Yamashita A."/>
            <person name="Oshima K."/>
            <person name="Furuya K."/>
            <person name="Yoshino C."/>
            <person name="Shiba T."/>
            <person name="Hattori M."/>
            <person name="Ogasawara N."/>
            <person name="Hayashi H."/>
            <person name="Hiramatsu K."/>
        </authorList>
    </citation>
    <scope>NUCLEOTIDE SEQUENCE [LARGE SCALE GENOMIC DNA]</scope>
    <source>
        <strain>N315</strain>
    </source>
</reference>
<reference key="2">
    <citation type="journal article" date="2005" name="J. Microbiol. Methods">
        <title>Correlation of proteomic and transcriptomic profiles of Staphylococcus aureus during the post-exponential phase of growth.</title>
        <authorList>
            <person name="Scherl A."/>
            <person name="Francois P."/>
            <person name="Bento M."/>
            <person name="Deshusses J.M."/>
            <person name="Charbonnier Y."/>
            <person name="Converset V."/>
            <person name="Huyghe A."/>
            <person name="Walter N."/>
            <person name="Hoogland C."/>
            <person name="Appel R.D."/>
            <person name="Sanchez J.-C."/>
            <person name="Zimmermann-Ivol C.G."/>
            <person name="Corthals G.L."/>
            <person name="Hochstrasser D.F."/>
            <person name="Schrenzel J."/>
        </authorList>
    </citation>
    <scope>IDENTIFICATION BY MASS SPECTROMETRY</scope>
    <source>
        <strain>N315</strain>
    </source>
</reference>
<reference key="3">
    <citation type="submission" date="2007-10" db="UniProtKB">
        <title>Shotgun proteomic analysis of total and membrane protein extracts of S. aureus strain N315.</title>
        <authorList>
            <person name="Vaezzadeh A.R."/>
            <person name="Deshusses J."/>
            <person name="Lescuyer P."/>
            <person name="Hochstrasser D.F."/>
        </authorList>
    </citation>
    <scope>IDENTIFICATION BY MASS SPECTROMETRY [LARGE SCALE ANALYSIS]</scope>
    <source>
        <strain>N315</strain>
    </source>
</reference>
<sequence length="438" mass="49291">MPKIVVVGAVAGGATCASQIRRLDKESDIIIFEKDRDMSFANCALPYVIGEVVEDRKYALAYTPEKFYDRKQITVKTYHEVIAINDERQTVTVLNRKTNEQFEESYDKLILSPGASANSLGFESDITFTLRNLEDTDAIDQFIKANQVDKVLVIGAGYVSLEVLENLYERGLHPTLIHRSDKINKLMDADMNQPILDELDKREIPYRLNEEIDAINGNEITFKSGKVEHYDMIIEGVGTHPNSKFIESSNIKLDRKGFIPVNDKFETNVPNIYAIGDIATSHYRHVDLPASVPLAWGAHRAASIVAEQIAGNDTIEFKGFLGNNIVKFFDYTFASVGVKPNELKQFDYKMVEVTQGAHANYYPGNSPLHLRVYYDTSNRQILRAAAVGKEGADKRIDVLSMAMMNQLTVDELTEFEVAYAPPYSHPKDLINMIGYKAK</sequence>
<evidence type="ECO:0000250" key="1"/>
<evidence type="ECO:0000255" key="2">
    <source>
        <dbReference type="HAMAP-Rule" id="MF_01608"/>
    </source>
</evidence>
<organism>
    <name type="scientific">Staphylococcus aureus (strain N315)</name>
    <dbReference type="NCBI Taxonomy" id="158879"/>
    <lineage>
        <taxon>Bacteria</taxon>
        <taxon>Bacillati</taxon>
        <taxon>Bacillota</taxon>
        <taxon>Bacilli</taxon>
        <taxon>Bacillales</taxon>
        <taxon>Staphylococcaceae</taxon>
        <taxon>Staphylococcus</taxon>
    </lineage>
</organism>
<accession>Q7A6H1</accession>
<feature type="initiator methionine" description="Removed" evidence="1">
    <location>
        <position position="1"/>
    </location>
</feature>
<feature type="chain" id="PRO_0000184691" description="Coenzyme A disulfide reductase">
    <location>
        <begin position="2"/>
        <end position="438"/>
    </location>
</feature>
<feature type="active site" description="Nucleophile" evidence="2">
    <location>
        <position position="43"/>
    </location>
</feature>
<feature type="active site" description="Redox-active" evidence="2">
    <location>
        <position position="43"/>
    </location>
</feature>
<feature type="binding site" evidence="2">
    <location>
        <begin position="8"/>
        <end position="33"/>
    </location>
    <ligand>
        <name>FAD</name>
        <dbReference type="ChEBI" id="CHEBI:57692"/>
    </ligand>
</feature>
<feature type="binding site" evidence="2">
    <location>
        <position position="15"/>
    </location>
    <ligand>
        <name>substrate</name>
    </ligand>
</feature>
<feature type="binding site" evidence="2">
    <location>
        <position position="19"/>
    </location>
    <ligand>
        <name>substrate</name>
    </ligand>
</feature>
<feature type="binding site" evidence="2">
    <location>
        <position position="22"/>
    </location>
    <ligand>
        <name>substrate</name>
    </ligand>
</feature>
<feature type="binding site" evidence="2">
    <location>
        <position position="39"/>
    </location>
    <ligand>
        <name>substrate</name>
    </ligand>
</feature>
<feature type="binding site" evidence="2">
    <location>
        <position position="42"/>
    </location>
    <ligand>
        <name>substrate</name>
    </ligand>
</feature>
<feature type="binding site" evidence="2">
    <location>
        <position position="71"/>
    </location>
    <ligand>
        <name>substrate</name>
    </ligand>
</feature>
<feature type="binding site" evidence="2">
    <location>
        <begin position="151"/>
        <end position="166"/>
    </location>
    <ligand>
        <name>NADP(+)</name>
        <dbReference type="ChEBI" id="CHEBI:58349"/>
    </ligand>
</feature>
<feature type="binding site" evidence="2">
    <location>
        <begin position="267"/>
        <end position="277"/>
    </location>
    <ligand>
        <name>FAD</name>
        <dbReference type="ChEBI" id="CHEBI:57692"/>
    </ligand>
</feature>
<feature type="binding site" evidence="2">
    <location>
        <position position="299"/>
    </location>
    <ligand>
        <name>substrate</name>
    </ligand>
</feature>
<feature type="binding site" evidence="2">
    <location>
        <position position="419"/>
    </location>
    <ligand>
        <name>FAD</name>
        <dbReference type="ChEBI" id="CHEBI:57692"/>
    </ligand>
</feature>
<feature type="binding site" evidence="2">
    <location>
        <position position="427"/>
    </location>
    <ligand>
        <name>substrate</name>
    </ligand>
</feature>
<comment type="function">
    <text evidence="2">Catalyzes specifically the NADPH-dependent reduction of coenzyme A disulfide.</text>
</comment>
<comment type="catalytic activity">
    <reaction evidence="2">
        <text>NADP(+) + 2 CoA = CoA-disulfide + NADPH + H(+)</text>
        <dbReference type="Rhea" id="RHEA:14705"/>
        <dbReference type="ChEBI" id="CHEBI:15378"/>
        <dbReference type="ChEBI" id="CHEBI:57287"/>
        <dbReference type="ChEBI" id="CHEBI:57783"/>
        <dbReference type="ChEBI" id="CHEBI:58349"/>
        <dbReference type="ChEBI" id="CHEBI:62209"/>
        <dbReference type="EC" id="1.8.1.14"/>
    </reaction>
</comment>
<comment type="cofactor">
    <cofactor evidence="2">
        <name>FAD</name>
        <dbReference type="ChEBI" id="CHEBI:57692"/>
    </cofactor>
    <text evidence="2">Binds 1 FAD per subunit.</text>
</comment>
<comment type="subunit">
    <text evidence="2">Homodimer.</text>
</comment>
<comment type="domain">
    <text evidence="2">Contains 2 FAD binding domains and a single NADPH binding domain.</text>
</comment>
<comment type="miscellaneous">
    <text evidence="2">Reduction of disulfides occurs by a thiol-disulfide exchange reaction, but involves only a single catalytic cysteine residue that forms a stable mixed disulfide with CoA during catalysis.</text>
</comment>
<comment type="similarity">
    <text evidence="2">Belongs to the class-III pyridine nucleotide-disulfide oxidoreductase family.</text>
</comment>
<proteinExistence type="evidence at protein level"/>
<dbReference type="EC" id="1.8.1.14" evidence="2"/>
<dbReference type="EMBL" id="BA000018">
    <property type="protein sequence ID" value="BAB42070.1"/>
    <property type="molecule type" value="Genomic_DNA"/>
</dbReference>
<dbReference type="PIR" id="C89864">
    <property type="entry name" value="C89864"/>
</dbReference>
<dbReference type="RefSeq" id="WP_001124506.1">
    <property type="nucleotide sequence ID" value="NC_002745.2"/>
</dbReference>
<dbReference type="SMR" id="Q7A6H1"/>
<dbReference type="EnsemblBacteria" id="BAB42070">
    <property type="protein sequence ID" value="BAB42070"/>
    <property type="gene ID" value="BAB42070"/>
</dbReference>
<dbReference type="KEGG" id="sau:SA0831"/>
<dbReference type="HOGENOM" id="CLU_003291_1_3_9"/>
<dbReference type="GO" id="GO:0050451">
    <property type="term" value="F:CoA-disulfide reductase (NADPH) activity"/>
    <property type="evidence" value="ECO:0007669"/>
    <property type="project" value="UniProtKB-UniRule"/>
</dbReference>
<dbReference type="GO" id="GO:0050660">
    <property type="term" value="F:flavin adenine dinucleotide binding"/>
    <property type="evidence" value="ECO:0007669"/>
    <property type="project" value="UniProtKB-UniRule"/>
</dbReference>
<dbReference type="GO" id="GO:0050661">
    <property type="term" value="F:NADP binding"/>
    <property type="evidence" value="ECO:0007669"/>
    <property type="project" value="UniProtKB-UniRule"/>
</dbReference>
<dbReference type="GO" id="GO:0003756">
    <property type="term" value="F:protein disulfide isomerase activity"/>
    <property type="evidence" value="ECO:0007669"/>
    <property type="project" value="UniProtKB-UniRule"/>
</dbReference>
<dbReference type="Gene3D" id="3.30.390.30">
    <property type="match status" value="1"/>
</dbReference>
<dbReference type="Gene3D" id="3.50.50.60">
    <property type="entry name" value="FAD/NAD(P)-binding domain"/>
    <property type="match status" value="2"/>
</dbReference>
<dbReference type="HAMAP" id="MF_01608">
    <property type="entry name" value="CoA_diS_reduct"/>
    <property type="match status" value="1"/>
</dbReference>
<dbReference type="InterPro" id="IPR017758">
    <property type="entry name" value="CoA_disulphide_reductase"/>
</dbReference>
<dbReference type="InterPro" id="IPR023536">
    <property type="entry name" value="CoA_disulphide_reductase_staph"/>
</dbReference>
<dbReference type="InterPro" id="IPR050260">
    <property type="entry name" value="FAD-bd_OxRdtase"/>
</dbReference>
<dbReference type="InterPro" id="IPR036188">
    <property type="entry name" value="FAD/NAD-bd_sf"/>
</dbReference>
<dbReference type="InterPro" id="IPR023753">
    <property type="entry name" value="FAD/NAD-binding_dom"/>
</dbReference>
<dbReference type="InterPro" id="IPR016156">
    <property type="entry name" value="FAD/NAD-linked_Rdtase_dimer_sf"/>
</dbReference>
<dbReference type="InterPro" id="IPR004099">
    <property type="entry name" value="Pyr_nucl-diS_OxRdtase_dimer"/>
</dbReference>
<dbReference type="NCBIfam" id="TIGR03385">
    <property type="entry name" value="CoA_CoA_reduc"/>
    <property type="match status" value="1"/>
</dbReference>
<dbReference type="NCBIfam" id="NF010037">
    <property type="entry name" value="PRK13512.1"/>
    <property type="match status" value="1"/>
</dbReference>
<dbReference type="PANTHER" id="PTHR43429:SF1">
    <property type="entry name" value="NAD(P)H SULFUR OXIDOREDUCTASE (COA-DEPENDENT)"/>
    <property type="match status" value="1"/>
</dbReference>
<dbReference type="PANTHER" id="PTHR43429">
    <property type="entry name" value="PYRIDINE NUCLEOTIDE-DISULFIDE OXIDOREDUCTASE DOMAIN-CONTAINING"/>
    <property type="match status" value="1"/>
</dbReference>
<dbReference type="Pfam" id="PF07992">
    <property type="entry name" value="Pyr_redox_2"/>
    <property type="match status" value="1"/>
</dbReference>
<dbReference type="Pfam" id="PF02852">
    <property type="entry name" value="Pyr_redox_dim"/>
    <property type="match status" value="1"/>
</dbReference>
<dbReference type="PRINTS" id="PR00368">
    <property type="entry name" value="FADPNR"/>
</dbReference>
<dbReference type="PRINTS" id="PR00411">
    <property type="entry name" value="PNDRDTASEI"/>
</dbReference>
<dbReference type="SUPFAM" id="SSF51905">
    <property type="entry name" value="FAD/NAD(P)-binding domain"/>
    <property type="match status" value="1"/>
</dbReference>
<dbReference type="SUPFAM" id="SSF55424">
    <property type="entry name" value="FAD/NAD-linked reductases, dimerisation (C-terminal) domain"/>
    <property type="match status" value="1"/>
</dbReference>
<protein>
    <recommendedName>
        <fullName evidence="2">Coenzyme A disulfide reductase</fullName>
        <shortName evidence="2">CoA-disulfide reductase</shortName>
        <shortName evidence="2">CoADR</shortName>
        <ecNumber evidence="2">1.8.1.14</ecNumber>
    </recommendedName>
</protein>